<evidence type="ECO:0000255" key="1">
    <source>
        <dbReference type="HAMAP-Rule" id="MF_01595"/>
    </source>
</evidence>
<organism>
    <name type="scientific">Brevibacillus brevis (strain 47 / JCM 6285 / NBRC 100599)</name>
    <dbReference type="NCBI Taxonomy" id="358681"/>
    <lineage>
        <taxon>Bacteria</taxon>
        <taxon>Bacillati</taxon>
        <taxon>Bacillota</taxon>
        <taxon>Bacilli</taxon>
        <taxon>Bacillales</taxon>
        <taxon>Paenibacillaceae</taxon>
        <taxon>Brevibacillus</taxon>
    </lineage>
</organism>
<protein>
    <recommendedName>
        <fullName evidence="1">Polyribonucleotide nucleotidyltransferase</fullName>
        <ecNumber evidence="1">2.7.7.8</ecNumber>
    </recommendedName>
    <alternativeName>
        <fullName evidence="1">Polynucleotide phosphorylase</fullName>
        <shortName evidence="1">PNPase</shortName>
    </alternativeName>
</protein>
<proteinExistence type="inferred from homology"/>
<feature type="chain" id="PRO_1000185724" description="Polyribonucleotide nucleotidyltransferase">
    <location>
        <begin position="1"/>
        <end position="715"/>
    </location>
</feature>
<feature type="domain" description="KH" evidence="1">
    <location>
        <begin position="558"/>
        <end position="617"/>
    </location>
</feature>
<feature type="domain" description="S1 motif" evidence="1">
    <location>
        <begin position="627"/>
        <end position="695"/>
    </location>
</feature>
<feature type="binding site" evidence="1">
    <location>
        <position position="491"/>
    </location>
    <ligand>
        <name>Mg(2+)</name>
        <dbReference type="ChEBI" id="CHEBI:18420"/>
    </ligand>
</feature>
<feature type="binding site" evidence="1">
    <location>
        <position position="497"/>
    </location>
    <ligand>
        <name>Mg(2+)</name>
        <dbReference type="ChEBI" id="CHEBI:18420"/>
    </ligand>
</feature>
<keyword id="KW-0963">Cytoplasm</keyword>
<keyword id="KW-0460">Magnesium</keyword>
<keyword id="KW-0479">Metal-binding</keyword>
<keyword id="KW-0548">Nucleotidyltransferase</keyword>
<keyword id="KW-1185">Reference proteome</keyword>
<keyword id="KW-0694">RNA-binding</keyword>
<keyword id="KW-0808">Transferase</keyword>
<dbReference type="EC" id="2.7.7.8" evidence="1"/>
<dbReference type="EMBL" id="AP008955">
    <property type="protein sequence ID" value="BAH44402.1"/>
    <property type="molecule type" value="Genomic_DNA"/>
</dbReference>
<dbReference type="RefSeq" id="WP_015891706.1">
    <property type="nucleotide sequence ID" value="NC_012491.1"/>
</dbReference>
<dbReference type="SMR" id="C0ZF43"/>
<dbReference type="STRING" id="358681.BBR47_34250"/>
<dbReference type="KEGG" id="bbe:BBR47_34250"/>
<dbReference type="eggNOG" id="COG1185">
    <property type="taxonomic scope" value="Bacteria"/>
</dbReference>
<dbReference type="HOGENOM" id="CLU_004217_2_2_9"/>
<dbReference type="Proteomes" id="UP000001877">
    <property type="component" value="Chromosome"/>
</dbReference>
<dbReference type="GO" id="GO:0005829">
    <property type="term" value="C:cytosol"/>
    <property type="evidence" value="ECO:0007669"/>
    <property type="project" value="TreeGrafter"/>
</dbReference>
<dbReference type="GO" id="GO:0000175">
    <property type="term" value="F:3'-5'-RNA exonuclease activity"/>
    <property type="evidence" value="ECO:0007669"/>
    <property type="project" value="TreeGrafter"/>
</dbReference>
<dbReference type="GO" id="GO:0000287">
    <property type="term" value="F:magnesium ion binding"/>
    <property type="evidence" value="ECO:0007669"/>
    <property type="project" value="UniProtKB-UniRule"/>
</dbReference>
<dbReference type="GO" id="GO:0004654">
    <property type="term" value="F:polyribonucleotide nucleotidyltransferase activity"/>
    <property type="evidence" value="ECO:0007669"/>
    <property type="project" value="UniProtKB-UniRule"/>
</dbReference>
<dbReference type="GO" id="GO:0003723">
    <property type="term" value="F:RNA binding"/>
    <property type="evidence" value="ECO:0007669"/>
    <property type="project" value="UniProtKB-UniRule"/>
</dbReference>
<dbReference type="GO" id="GO:0006402">
    <property type="term" value="P:mRNA catabolic process"/>
    <property type="evidence" value="ECO:0007669"/>
    <property type="project" value="UniProtKB-UniRule"/>
</dbReference>
<dbReference type="GO" id="GO:0006396">
    <property type="term" value="P:RNA processing"/>
    <property type="evidence" value="ECO:0007669"/>
    <property type="project" value="InterPro"/>
</dbReference>
<dbReference type="CDD" id="cd02393">
    <property type="entry name" value="KH-I_PNPase"/>
    <property type="match status" value="1"/>
</dbReference>
<dbReference type="CDD" id="cd11363">
    <property type="entry name" value="RNase_PH_PNPase_1"/>
    <property type="match status" value="1"/>
</dbReference>
<dbReference type="CDD" id="cd11364">
    <property type="entry name" value="RNase_PH_PNPase_2"/>
    <property type="match status" value="1"/>
</dbReference>
<dbReference type="CDD" id="cd04472">
    <property type="entry name" value="S1_PNPase"/>
    <property type="match status" value="1"/>
</dbReference>
<dbReference type="FunFam" id="2.40.50.140:FF:000023">
    <property type="entry name" value="Polyribonucleotide nucleotidyltransferase"/>
    <property type="match status" value="1"/>
</dbReference>
<dbReference type="FunFam" id="3.30.1370.10:FF:000001">
    <property type="entry name" value="Polyribonucleotide nucleotidyltransferase"/>
    <property type="match status" value="1"/>
</dbReference>
<dbReference type="FunFam" id="3.30.230.70:FF:000001">
    <property type="entry name" value="Polyribonucleotide nucleotidyltransferase"/>
    <property type="match status" value="1"/>
</dbReference>
<dbReference type="FunFam" id="3.30.230.70:FF:000002">
    <property type="entry name" value="Polyribonucleotide nucleotidyltransferase"/>
    <property type="match status" value="1"/>
</dbReference>
<dbReference type="Gene3D" id="3.30.230.70">
    <property type="entry name" value="GHMP Kinase, N-terminal domain"/>
    <property type="match status" value="2"/>
</dbReference>
<dbReference type="Gene3D" id="3.30.1370.10">
    <property type="entry name" value="K Homology domain, type 1"/>
    <property type="match status" value="1"/>
</dbReference>
<dbReference type="Gene3D" id="2.40.50.140">
    <property type="entry name" value="Nucleic acid-binding proteins"/>
    <property type="match status" value="1"/>
</dbReference>
<dbReference type="HAMAP" id="MF_01595">
    <property type="entry name" value="PNPase"/>
    <property type="match status" value="1"/>
</dbReference>
<dbReference type="InterPro" id="IPR001247">
    <property type="entry name" value="ExoRNase_PH_dom1"/>
</dbReference>
<dbReference type="InterPro" id="IPR015847">
    <property type="entry name" value="ExoRNase_PH_dom2"/>
</dbReference>
<dbReference type="InterPro" id="IPR036345">
    <property type="entry name" value="ExoRNase_PH_dom2_sf"/>
</dbReference>
<dbReference type="InterPro" id="IPR004087">
    <property type="entry name" value="KH_dom"/>
</dbReference>
<dbReference type="InterPro" id="IPR004088">
    <property type="entry name" value="KH_dom_type_1"/>
</dbReference>
<dbReference type="InterPro" id="IPR036612">
    <property type="entry name" value="KH_dom_type_1_sf"/>
</dbReference>
<dbReference type="InterPro" id="IPR012340">
    <property type="entry name" value="NA-bd_OB-fold"/>
</dbReference>
<dbReference type="InterPro" id="IPR012162">
    <property type="entry name" value="PNPase"/>
</dbReference>
<dbReference type="InterPro" id="IPR027408">
    <property type="entry name" value="PNPase/RNase_PH_dom_sf"/>
</dbReference>
<dbReference type="InterPro" id="IPR015848">
    <property type="entry name" value="PNPase_PH_RNA-bd_bac/org-type"/>
</dbReference>
<dbReference type="InterPro" id="IPR020568">
    <property type="entry name" value="Ribosomal_Su5_D2-typ_SF"/>
</dbReference>
<dbReference type="InterPro" id="IPR003029">
    <property type="entry name" value="S1_domain"/>
</dbReference>
<dbReference type="NCBIfam" id="TIGR03591">
    <property type="entry name" value="polynuc_phos"/>
    <property type="match status" value="1"/>
</dbReference>
<dbReference type="NCBIfam" id="NF008805">
    <property type="entry name" value="PRK11824.1"/>
    <property type="match status" value="1"/>
</dbReference>
<dbReference type="PANTHER" id="PTHR11252">
    <property type="entry name" value="POLYRIBONUCLEOTIDE NUCLEOTIDYLTRANSFERASE"/>
    <property type="match status" value="1"/>
</dbReference>
<dbReference type="PANTHER" id="PTHR11252:SF0">
    <property type="entry name" value="POLYRIBONUCLEOTIDE NUCLEOTIDYLTRANSFERASE 1, MITOCHONDRIAL"/>
    <property type="match status" value="1"/>
</dbReference>
<dbReference type="Pfam" id="PF00013">
    <property type="entry name" value="KH_1"/>
    <property type="match status" value="1"/>
</dbReference>
<dbReference type="Pfam" id="PF03726">
    <property type="entry name" value="PNPase"/>
    <property type="match status" value="1"/>
</dbReference>
<dbReference type="Pfam" id="PF01138">
    <property type="entry name" value="RNase_PH"/>
    <property type="match status" value="2"/>
</dbReference>
<dbReference type="Pfam" id="PF03725">
    <property type="entry name" value="RNase_PH_C"/>
    <property type="match status" value="2"/>
</dbReference>
<dbReference type="Pfam" id="PF00575">
    <property type="entry name" value="S1"/>
    <property type="match status" value="1"/>
</dbReference>
<dbReference type="PIRSF" id="PIRSF005499">
    <property type="entry name" value="PNPase"/>
    <property type="match status" value="1"/>
</dbReference>
<dbReference type="SMART" id="SM00322">
    <property type="entry name" value="KH"/>
    <property type="match status" value="1"/>
</dbReference>
<dbReference type="SMART" id="SM00316">
    <property type="entry name" value="S1"/>
    <property type="match status" value="1"/>
</dbReference>
<dbReference type="SUPFAM" id="SSF54791">
    <property type="entry name" value="Eukaryotic type KH-domain (KH-domain type I)"/>
    <property type="match status" value="1"/>
</dbReference>
<dbReference type="SUPFAM" id="SSF50249">
    <property type="entry name" value="Nucleic acid-binding proteins"/>
    <property type="match status" value="1"/>
</dbReference>
<dbReference type="SUPFAM" id="SSF55666">
    <property type="entry name" value="Ribonuclease PH domain 2-like"/>
    <property type="match status" value="2"/>
</dbReference>
<dbReference type="SUPFAM" id="SSF54211">
    <property type="entry name" value="Ribosomal protein S5 domain 2-like"/>
    <property type="match status" value="2"/>
</dbReference>
<dbReference type="PROSITE" id="PS50084">
    <property type="entry name" value="KH_TYPE_1"/>
    <property type="match status" value="1"/>
</dbReference>
<dbReference type="PROSITE" id="PS50126">
    <property type="entry name" value="S1"/>
    <property type="match status" value="1"/>
</dbReference>
<accession>C0ZF43</accession>
<sequence length="715" mass="78518">MEQQYRTYDFELAGRKLTLEFGKMAKQAHGSVLVRYGDTAILSAVTVSKEPKPLDFFPLTVNYEERLYAVGKIPGGFIKREGRPSEKAILASRLIDRPVRPLFAEGFRNDVQIVNTVLSVDQDCSPEIAAMIGTSAALCVSEIPFEGPIAGVIVGRIDGEFVINPTVAQAEKSDIHLTVAGTHKAINMVEAAANQVPEAIMLEAIMAGHDVIKQLVEFQNMIVSEIGKQKMEVILHEVDPEIDQAVRAYAEARLKEAVRIEEKQARYDAIDDIKAETKEHFAAKDAEAYPEQEKMISEVLGNIVKDEVRRLITDEKVRPDGRALNEIRPLSSETTILSRTHGSAMFTRGQTQALSVCTLGALGDVQILDGLGLEESKRFMHHYNFPPYSVGEARPLRPPGRREIGHGALGERAIEPIIPSEVEFPYTIRLVSEVIESNGSTSQASICASVLALMDAGVPIKAPVAGIAMGLIMSKDEKSFSILTDIQGMEDHLGDMDFKVAGTEAGVTAIQMDIKISGINREILELALEQARVGRLHILNHMMSTISEPRKELSPYAPKIMTMTINPEKIRDVIGPQGRVINKIIEETGVKIDIEQDGRVFIASINHEANLRAKQIIEDLVREVAVGQVYLGTVKRVEKYGAFIELFAGKEGLCHISQLAEERVAKTEDVVAVGDKVQVKVTEIDDQGRVNLSRKAVLKEQAAAEQAAETPTKAE</sequence>
<name>PNP_BREBN</name>
<gene>
    <name evidence="1" type="primary">pnp</name>
    <name type="ordered locus">BBR47_34250</name>
</gene>
<comment type="function">
    <text evidence="1">Involved in mRNA degradation. Catalyzes the phosphorolysis of single-stranded polyribonucleotides processively in the 3'- to 5'-direction.</text>
</comment>
<comment type="catalytic activity">
    <reaction evidence="1">
        <text>RNA(n+1) + phosphate = RNA(n) + a ribonucleoside 5'-diphosphate</text>
        <dbReference type="Rhea" id="RHEA:22096"/>
        <dbReference type="Rhea" id="RHEA-COMP:14527"/>
        <dbReference type="Rhea" id="RHEA-COMP:17342"/>
        <dbReference type="ChEBI" id="CHEBI:43474"/>
        <dbReference type="ChEBI" id="CHEBI:57930"/>
        <dbReference type="ChEBI" id="CHEBI:140395"/>
        <dbReference type="EC" id="2.7.7.8"/>
    </reaction>
</comment>
<comment type="cofactor">
    <cofactor evidence="1">
        <name>Mg(2+)</name>
        <dbReference type="ChEBI" id="CHEBI:18420"/>
    </cofactor>
</comment>
<comment type="subcellular location">
    <subcellularLocation>
        <location evidence="1">Cytoplasm</location>
    </subcellularLocation>
</comment>
<comment type="similarity">
    <text evidence="1">Belongs to the polyribonucleotide nucleotidyltransferase family.</text>
</comment>
<reference key="1">
    <citation type="submission" date="2005-03" db="EMBL/GenBank/DDBJ databases">
        <title>Brevibacillus brevis strain 47, complete genome.</title>
        <authorList>
            <person name="Hosoyama A."/>
            <person name="Yamada R."/>
            <person name="Hongo Y."/>
            <person name="Terui Y."/>
            <person name="Ankai A."/>
            <person name="Masuyama W."/>
            <person name="Sekiguchi M."/>
            <person name="Takeda T."/>
            <person name="Asano K."/>
            <person name="Ohji S."/>
            <person name="Ichikawa N."/>
            <person name="Narita S."/>
            <person name="Aoki N."/>
            <person name="Miura H."/>
            <person name="Matsushita S."/>
            <person name="Sekigawa T."/>
            <person name="Yamagata H."/>
            <person name="Yoshikawa H."/>
            <person name="Udaka S."/>
            <person name="Tanikawa S."/>
            <person name="Fujita N."/>
        </authorList>
    </citation>
    <scope>NUCLEOTIDE SEQUENCE [LARGE SCALE GENOMIC DNA]</scope>
    <source>
        <strain>47 / JCM 6285 / NBRC 100599</strain>
    </source>
</reference>